<name>SELO_SHEPC</name>
<evidence type="ECO:0000255" key="1">
    <source>
        <dbReference type="HAMAP-Rule" id="MF_00692"/>
    </source>
</evidence>
<feature type="chain" id="PRO_1000045259" description="Protein nucleotidyltransferase YdiU">
    <location>
        <begin position="1"/>
        <end position="484"/>
    </location>
</feature>
<feature type="active site" description="Proton acceptor" evidence="1">
    <location>
        <position position="244"/>
    </location>
</feature>
<feature type="binding site" evidence="1">
    <location>
        <position position="81"/>
    </location>
    <ligand>
        <name>ATP</name>
        <dbReference type="ChEBI" id="CHEBI:30616"/>
    </ligand>
</feature>
<feature type="binding site" evidence="1">
    <location>
        <position position="83"/>
    </location>
    <ligand>
        <name>ATP</name>
        <dbReference type="ChEBI" id="CHEBI:30616"/>
    </ligand>
</feature>
<feature type="binding site" evidence="1">
    <location>
        <position position="84"/>
    </location>
    <ligand>
        <name>ATP</name>
        <dbReference type="ChEBI" id="CHEBI:30616"/>
    </ligand>
</feature>
<feature type="binding site" evidence="1">
    <location>
        <position position="103"/>
    </location>
    <ligand>
        <name>ATP</name>
        <dbReference type="ChEBI" id="CHEBI:30616"/>
    </ligand>
</feature>
<feature type="binding site" evidence="1">
    <location>
        <position position="115"/>
    </location>
    <ligand>
        <name>ATP</name>
        <dbReference type="ChEBI" id="CHEBI:30616"/>
    </ligand>
</feature>
<feature type="binding site" evidence="1">
    <location>
        <position position="116"/>
    </location>
    <ligand>
        <name>ATP</name>
        <dbReference type="ChEBI" id="CHEBI:30616"/>
    </ligand>
</feature>
<feature type="binding site" evidence="1">
    <location>
        <position position="166"/>
    </location>
    <ligand>
        <name>ATP</name>
        <dbReference type="ChEBI" id="CHEBI:30616"/>
    </ligand>
</feature>
<feature type="binding site" evidence="1">
    <location>
        <position position="173"/>
    </location>
    <ligand>
        <name>ATP</name>
        <dbReference type="ChEBI" id="CHEBI:30616"/>
    </ligand>
</feature>
<feature type="binding site" evidence="1">
    <location>
        <position position="245"/>
    </location>
    <ligand>
        <name>Mg(2+)</name>
        <dbReference type="ChEBI" id="CHEBI:18420"/>
    </ligand>
</feature>
<feature type="binding site" evidence="1">
    <location>
        <position position="254"/>
    </location>
    <ligand>
        <name>ATP</name>
        <dbReference type="ChEBI" id="CHEBI:30616"/>
    </ligand>
</feature>
<feature type="binding site" evidence="1">
    <location>
        <position position="254"/>
    </location>
    <ligand>
        <name>Mg(2+)</name>
        <dbReference type="ChEBI" id="CHEBI:18420"/>
    </ligand>
</feature>
<organism>
    <name type="scientific">Shewanella putrefaciens (strain CN-32 / ATCC BAA-453)</name>
    <dbReference type="NCBI Taxonomy" id="319224"/>
    <lineage>
        <taxon>Bacteria</taxon>
        <taxon>Pseudomonadati</taxon>
        <taxon>Pseudomonadota</taxon>
        <taxon>Gammaproteobacteria</taxon>
        <taxon>Alteromonadales</taxon>
        <taxon>Shewanellaceae</taxon>
        <taxon>Shewanella</taxon>
    </lineage>
</organism>
<sequence length="484" mass="54559">MQFKQDFFTQLPEFYSQVYPQGLSHPQWLAWSHDAAQLIGLTQPTDELLLGLSGNAAIDGATYYAQVYSGHQFGGYTPRLGDGRSIILGEAIGPNGAWDVALKGGGPTPYSRHGDGRAVMRSAVREFLVSEALYHLHVPTTRALAVIGSDMPVWRESQETAAITVRLARSHIRFGHFEFFCHSERGRADKLLQLLNFTITQHYPHLSCDPSGYKAWFLQVVQDTAKMIAHWQAVGFAHGVMNTDNMSILGDSFDFGPFAFLDTFQEDFICNHSDPEGRYAFGQQPGVGLWNLQRLAQALTPVIPSDDLIAILNQYQEALVQTYLLLMRAKLGLTTLDKSTAEQDKQDLELIGQFTVLMEKNQLDYAQTWRQFGQLDPRSQHSSLRDDFIDTHQFDTWYKAYQLRLGDVTDIAAWQTERNSVNPKYILRNYLAQEAIIAVEEGNLAPLQRLQQVLSQPFAEQVEHDELAKRPPDWGQGLIMSCSS</sequence>
<proteinExistence type="inferred from homology"/>
<accession>A4YBN4</accession>
<comment type="function">
    <text evidence="1">Nucleotidyltransferase involved in the post-translational modification of proteins. It can catalyze the addition of adenosine monophosphate (AMP) or uridine monophosphate (UMP) to a protein, resulting in modifications known as AMPylation and UMPylation.</text>
</comment>
<comment type="catalytic activity">
    <reaction evidence="1">
        <text>L-seryl-[protein] + ATP = 3-O-(5'-adenylyl)-L-seryl-[protein] + diphosphate</text>
        <dbReference type="Rhea" id="RHEA:58120"/>
        <dbReference type="Rhea" id="RHEA-COMP:9863"/>
        <dbReference type="Rhea" id="RHEA-COMP:15073"/>
        <dbReference type="ChEBI" id="CHEBI:29999"/>
        <dbReference type="ChEBI" id="CHEBI:30616"/>
        <dbReference type="ChEBI" id="CHEBI:33019"/>
        <dbReference type="ChEBI" id="CHEBI:142516"/>
        <dbReference type="EC" id="2.7.7.108"/>
    </reaction>
</comment>
<comment type="catalytic activity">
    <reaction evidence="1">
        <text>L-threonyl-[protein] + ATP = 3-O-(5'-adenylyl)-L-threonyl-[protein] + diphosphate</text>
        <dbReference type="Rhea" id="RHEA:54292"/>
        <dbReference type="Rhea" id="RHEA-COMP:11060"/>
        <dbReference type="Rhea" id="RHEA-COMP:13847"/>
        <dbReference type="ChEBI" id="CHEBI:30013"/>
        <dbReference type="ChEBI" id="CHEBI:30616"/>
        <dbReference type="ChEBI" id="CHEBI:33019"/>
        <dbReference type="ChEBI" id="CHEBI:138113"/>
        <dbReference type="EC" id="2.7.7.108"/>
    </reaction>
</comment>
<comment type="catalytic activity">
    <reaction evidence="1">
        <text>L-tyrosyl-[protein] + ATP = O-(5'-adenylyl)-L-tyrosyl-[protein] + diphosphate</text>
        <dbReference type="Rhea" id="RHEA:54288"/>
        <dbReference type="Rhea" id="RHEA-COMP:10136"/>
        <dbReference type="Rhea" id="RHEA-COMP:13846"/>
        <dbReference type="ChEBI" id="CHEBI:30616"/>
        <dbReference type="ChEBI" id="CHEBI:33019"/>
        <dbReference type="ChEBI" id="CHEBI:46858"/>
        <dbReference type="ChEBI" id="CHEBI:83624"/>
        <dbReference type="EC" id="2.7.7.108"/>
    </reaction>
</comment>
<comment type="catalytic activity">
    <reaction evidence="1">
        <text>L-histidyl-[protein] + UTP = N(tele)-(5'-uridylyl)-L-histidyl-[protein] + diphosphate</text>
        <dbReference type="Rhea" id="RHEA:83891"/>
        <dbReference type="Rhea" id="RHEA-COMP:9745"/>
        <dbReference type="Rhea" id="RHEA-COMP:20239"/>
        <dbReference type="ChEBI" id="CHEBI:29979"/>
        <dbReference type="ChEBI" id="CHEBI:33019"/>
        <dbReference type="ChEBI" id="CHEBI:46398"/>
        <dbReference type="ChEBI" id="CHEBI:233474"/>
    </reaction>
</comment>
<comment type="catalytic activity">
    <reaction evidence="1">
        <text>L-seryl-[protein] + UTP = O-(5'-uridylyl)-L-seryl-[protein] + diphosphate</text>
        <dbReference type="Rhea" id="RHEA:64604"/>
        <dbReference type="Rhea" id="RHEA-COMP:9863"/>
        <dbReference type="Rhea" id="RHEA-COMP:16635"/>
        <dbReference type="ChEBI" id="CHEBI:29999"/>
        <dbReference type="ChEBI" id="CHEBI:33019"/>
        <dbReference type="ChEBI" id="CHEBI:46398"/>
        <dbReference type="ChEBI" id="CHEBI:156051"/>
    </reaction>
</comment>
<comment type="catalytic activity">
    <reaction evidence="1">
        <text>L-tyrosyl-[protein] + UTP = O-(5'-uridylyl)-L-tyrosyl-[protein] + diphosphate</text>
        <dbReference type="Rhea" id="RHEA:83887"/>
        <dbReference type="Rhea" id="RHEA-COMP:10136"/>
        <dbReference type="Rhea" id="RHEA-COMP:20238"/>
        <dbReference type="ChEBI" id="CHEBI:33019"/>
        <dbReference type="ChEBI" id="CHEBI:46398"/>
        <dbReference type="ChEBI" id="CHEBI:46858"/>
        <dbReference type="ChEBI" id="CHEBI:90602"/>
    </reaction>
</comment>
<comment type="cofactor">
    <cofactor evidence="1">
        <name>Mg(2+)</name>
        <dbReference type="ChEBI" id="CHEBI:18420"/>
    </cofactor>
    <cofactor evidence="1">
        <name>Mn(2+)</name>
        <dbReference type="ChEBI" id="CHEBI:29035"/>
    </cofactor>
</comment>
<comment type="similarity">
    <text evidence="1">Belongs to the SELO family.</text>
</comment>
<gene>
    <name evidence="1" type="primary">ydiU</name>
    <name evidence="1" type="synonym">selO</name>
    <name type="ordered locus">Sputcn32_3659</name>
</gene>
<protein>
    <recommendedName>
        <fullName evidence="1">Protein nucleotidyltransferase YdiU</fullName>
        <ecNumber evidence="1">2.7.7.-</ecNumber>
    </recommendedName>
    <alternativeName>
        <fullName evidence="1">Protein adenylyltransferase YdiU</fullName>
        <ecNumber evidence="1">2.7.7.108</ecNumber>
    </alternativeName>
    <alternativeName>
        <fullName evidence="1">Protein uridylyltransferase YdiU</fullName>
        <ecNumber evidence="1">2.7.7.-</ecNumber>
    </alternativeName>
</protein>
<keyword id="KW-0067">ATP-binding</keyword>
<keyword id="KW-0460">Magnesium</keyword>
<keyword id="KW-0464">Manganese</keyword>
<keyword id="KW-0479">Metal-binding</keyword>
<keyword id="KW-0547">Nucleotide-binding</keyword>
<keyword id="KW-0548">Nucleotidyltransferase</keyword>
<keyword id="KW-0808">Transferase</keyword>
<reference key="1">
    <citation type="submission" date="2007-04" db="EMBL/GenBank/DDBJ databases">
        <title>Complete sequence of Shewanella putrefaciens CN-32.</title>
        <authorList>
            <consortium name="US DOE Joint Genome Institute"/>
            <person name="Copeland A."/>
            <person name="Lucas S."/>
            <person name="Lapidus A."/>
            <person name="Barry K."/>
            <person name="Detter J.C."/>
            <person name="Glavina del Rio T."/>
            <person name="Hammon N."/>
            <person name="Israni S."/>
            <person name="Dalin E."/>
            <person name="Tice H."/>
            <person name="Pitluck S."/>
            <person name="Chain P."/>
            <person name="Malfatti S."/>
            <person name="Shin M."/>
            <person name="Vergez L."/>
            <person name="Schmutz J."/>
            <person name="Larimer F."/>
            <person name="Land M."/>
            <person name="Hauser L."/>
            <person name="Kyrpides N."/>
            <person name="Mikhailova N."/>
            <person name="Romine M.F."/>
            <person name="Fredrickson J."/>
            <person name="Tiedje J."/>
            <person name="Richardson P."/>
        </authorList>
    </citation>
    <scope>NUCLEOTIDE SEQUENCE [LARGE SCALE GENOMIC DNA]</scope>
    <source>
        <strain>CN-32 / ATCC BAA-453</strain>
    </source>
</reference>
<dbReference type="EC" id="2.7.7.-" evidence="1"/>
<dbReference type="EC" id="2.7.7.108" evidence="1"/>
<dbReference type="EMBL" id="CP000681">
    <property type="protein sequence ID" value="ABP77367.1"/>
    <property type="molecule type" value="Genomic_DNA"/>
</dbReference>
<dbReference type="SMR" id="A4YBN4"/>
<dbReference type="STRING" id="319224.Sputcn32_3659"/>
<dbReference type="KEGG" id="spc:Sputcn32_3659"/>
<dbReference type="eggNOG" id="COG0397">
    <property type="taxonomic scope" value="Bacteria"/>
</dbReference>
<dbReference type="HOGENOM" id="CLU_010245_4_1_6"/>
<dbReference type="GO" id="GO:0070733">
    <property type="term" value="F:AMPylase activity"/>
    <property type="evidence" value="ECO:0007669"/>
    <property type="project" value="RHEA"/>
</dbReference>
<dbReference type="GO" id="GO:0005524">
    <property type="term" value="F:ATP binding"/>
    <property type="evidence" value="ECO:0007669"/>
    <property type="project" value="UniProtKB-UniRule"/>
</dbReference>
<dbReference type="GO" id="GO:0000287">
    <property type="term" value="F:magnesium ion binding"/>
    <property type="evidence" value="ECO:0007669"/>
    <property type="project" value="UniProtKB-UniRule"/>
</dbReference>
<dbReference type="HAMAP" id="MF_00692">
    <property type="entry name" value="YdiU_SelO"/>
    <property type="match status" value="1"/>
</dbReference>
<dbReference type="InterPro" id="IPR003846">
    <property type="entry name" value="SelO"/>
</dbReference>
<dbReference type="NCBIfam" id="NF000658">
    <property type="entry name" value="PRK00029.1"/>
    <property type="match status" value="1"/>
</dbReference>
<dbReference type="PANTHER" id="PTHR32057">
    <property type="entry name" value="PROTEIN ADENYLYLTRANSFERASE SELO, MITOCHONDRIAL"/>
    <property type="match status" value="1"/>
</dbReference>
<dbReference type="PANTHER" id="PTHR32057:SF14">
    <property type="entry name" value="PROTEIN ADENYLYLTRANSFERASE SELO, MITOCHONDRIAL"/>
    <property type="match status" value="1"/>
</dbReference>
<dbReference type="Pfam" id="PF02696">
    <property type="entry name" value="SelO"/>
    <property type="match status" value="1"/>
</dbReference>